<name>RT19_TETSU</name>
<keyword id="KW-0496">Mitochondrion</keyword>
<keyword id="KW-0687">Ribonucleoprotein</keyword>
<keyword id="KW-0689">Ribosomal protein</keyword>
<protein>
    <recommendedName>
        <fullName evidence="1">Small ribosomal subunit protein uS19m</fullName>
    </recommendedName>
    <alternativeName>
        <fullName>Ribosomal protein S19, mitochondrial</fullName>
    </alternativeName>
</protein>
<feature type="chain" id="PRO_0000130021" description="Small ribosomal subunit protein uS19m">
    <location>
        <begin position="1"/>
        <end position="83"/>
    </location>
</feature>
<gene>
    <name type="primary">RPS19</name>
</gene>
<comment type="subcellular location">
    <subcellularLocation>
        <location>Mitochondrion</location>
    </subcellularLocation>
</comment>
<comment type="similarity">
    <text evidence="1">Belongs to the universal ribosomal protein uS19 family.</text>
</comment>
<geneLocation type="mitochondrion"/>
<evidence type="ECO:0000305" key="1"/>
<reference key="1">
    <citation type="thesis" date="1995" institute="Justus Liebig University / Frankfurt" country="Germany">
        <authorList>
            <person name="Kessler U."/>
        </authorList>
    </citation>
    <scope>NUCLEOTIDE SEQUENCE [GENOMIC DNA]</scope>
</reference>
<reference key="2">
    <citation type="journal article" date="1995" name="Plant Mol. Biol.">
        <title>Physical map and gene organization of the mitochondrial genome from the unicellular green alga Platymonas (Tetraselmis) subcordiformis (Prasinophyceae).</title>
        <authorList>
            <person name="Kessler U."/>
            <person name="Zetsche K."/>
        </authorList>
    </citation>
    <scope>NUCLEOTIDE SEQUENCE [GENOMIC DNA]</scope>
</reference>
<accession>P50893</accession>
<organism>
    <name type="scientific">Tetraselmis subcordiformis</name>
    <name type="common">Marine green alga</name>
    <name type="synonym">Carteria subcordiformis</name>
    <dbReference type="NCBI Taxonomy" id="3161"/>
    <lineage>
        <taxon>Eukaryota</taxon>
        <taxon>Viridiplantae</taxon>
        <taxon>Chlorophyta</taxon>
        <taxon>core chlorophytes</taxon>
        <taxon>Chlorodendrophyceae</taxon>
        <taxon>Chlorodendrales</taxon>
        <taxon>Chlorodendraceae</taxon>
        <taxon>Tetraselmis</taxon>
    </lineage>
</organism>
<proteinExistence type="inferred from homology"/>
<dbReference type="EMBL" id="Z47795">
    <property type="protein sequence ID" value="CAA87752.1"/>
    <property type="molecule type" value="Genomic_DNA"/>
</dbReference>
<dbReference type="PIR" id="S62705">
    <property type="entry name" value="S62705"/>
</dbReference>
<dbReference type="SMR" id="P50893"/>
<dbReference type="GO" id="GO:0005763">
    <property type="term" value="C:mitochondrial small ribosomal subunit"/>
    <property type="evidence" value="ECO:0007669"/>
    <property type="project" value="TreeGrafter"/>
</dbReference>
<dbReference type="GO" id="GO:0003723">
    <property type="term" value="F:RNA binding"/>
    <property type="evidence" value="ECO:0007669"/>
    <property type="project" value="InterPro"/>
</dbReference>
<dbReference type="GO" id="GO:0003735">
    <property type="term" value="F:structural constituent of ribosome"/>
    <property type="evidence" value="ECO:0007669"/>
    <property type="project" value="InterPro"/>
</dbReference>
<dbReference type="GO" id="GO:0000028">
    <property type="term" value="P:ribosomal small subunit assembly"/>
    <property type="evidence" value="ECO:0007669"/>
    <property type="project" value="TreeGrafter"/>
</dbReference>
<dbReference type="GO" id="GO:0006412">
    <property type="term" value="P:translation"/>
    <property type="evidence" value="ECO:0007669"/>
    <property type="project" value="InterPro"/>
</dbReference>
<dbReference type="Gene3D" id="3.30.860.10">
    <property type="entry name" value="30s Ribosomal Protein S19, Chain A"/>
    <property type="match status" value="1"/>
</dbReference>
<dbReference type="HAMAP" id="MF_00531">
    <property type="entry name" value="Ribosomal_uS19"/>
    <property type="match status" value="1"/>
</dbReference>
<dbReference type="InterPro" id="IPR002222">
    <property type="entry name" value="Ribosomal_uS19"/>
</dbReference>
<dbReference type="InterPro" id="IPR005732">
    <property type="entry name" value="Ribosomal_uS19_bac-type"/>
</dbReference>
<dbReference type="InterPro" id="IPR020934">
    <property type="entry name" value="Ribosomal_uS19_CS"/>
</dbReference>
<dbReference type="InterPro" id="IPR023575">
    <property type="entry name" value="Ribosomal_uS19_SF"/>
</dbReference>
<dbReference type="NCBIfam" id="TIGR01050">
    <property type="entry name" value="rpsS_bact"/>
    <property type="match status" value="1"/>
</dbReference>
<dbReference type="PANTHER" id="PTHR11880">
    <property type="entry name" value="RIBOSOMAL PROTEIN S19P FAMILY MEMBER"/>
    <property type="match status" value="1"/>
</dbReference>
<dbReference type="PANTHER" id="PTHR11880:SF67">
    <property type="entry name" value="SMALL RIBOSOMAL SUBUNIT PROTEIN US19M"/>
    <property type="match status" value="1"/>
</dbReference>
<dbReference type="Pfam" id="PF00203">
    <property type="entry name" value="Ribosomal_S19"/>
    <property type="match status" value="1"/>
</dbReference>
<dbReference type="PIRSF" id="PIRSF002144">
    <property type="entry name" value="Ribosomal_S19"/>
    <property type="match status" value="1"/>
</dbReference>
<dbReference type="PRINTS" id="PR00975">
    <property type="entry name" value="RIBOSOMALS19"/>
</dbReference>
<dbReference type="SUPFAM" id="SSF54570">
    <property type="entry name" value="Ribosomal protein S19"/>
    <property type="match status" value="1"/>
</dbReference>
<dbReference type="PROSITE" id="PS00323">
    <property type="entry name" value="RIBOSOMAL_S19"/>
    <property type="match status" value="1"/>
</dbReference>
<sequence>MSRAIWKGPFIDPFFFRKNGSSNSNNKIYSRRSVVSPKFIGREVEIYNGHKWITIKIKEDMIGHKFGEFAFTRKATIHKKKTK</sequence>